<proteinExistence type="inferred from homology"/>
<reference key="1">
    <citation type="journal article" date="2006" name="Proc. Natl. Acad. Sci. U.S.A.">
        <title>Molecular genetic anatomy of inter- and intraserotype variation in the human bacterial pathogen group A Streptococcus.</title>
        <authorList>
            <person name="Beres S.B."/>
            <person name="Richter E.W."/>
            <person name="Nagiec M.J."/>
            <person name="Sumby P."/>
            <person name="Porcella S.F."/>
            <person name="DeLeo F.R."/>
            <person name="Musser J.M."/>
        </authorList>
    </citation>
    <scope>NUCLEOTIDE SEQUENCE [LARGE SCALE GENOMIC DNA]</scope>
    <source>
        <strain>MGAS10270</strain>
    </source>
</reference>
<protein>
    <recommendedName>
        <fullName evidence="1">Large ribosomal subunit protein bL34</fullName>
    </recommendedName>
    <alternativeName>
        <fullName evidence="3">50S ribosomal protein L34</fullName>
    </alternativeName>
</protein>
<comment type="similarity">
    <text evidence="1">Belongs to the bacterial ribosomal protein bL34 family.</text>
</comment>
<gene>
    <name evidence="1" type="primary">rpmH</name>
    <name type="ordered locus">MGAS10270_Spy0210</name>
</gene>
<sequence length="44" mass="5361">MKRTYQPSKIRRQRKHGFRHRMSTKNGRRVLAARRRKGRKVLSA</sequence>
<keyword id="KW-0687">Ribonucleoprotein</keyword>
<keyword id="KW-0689">Ribosomal protein</keyword>
<evidence type="ECO:0000255" key="1">
    <source>
        <dbReference type="HAMAP-Rule" id="MF_00391"/>
    </source>
</evidence>
<evidence type="ECO:0000256" key="2">
    <source>
        <dbReference type="SAM" id="MobiDB-lite"/>
    </source>
</evidence>
<evidence type="ECO:0000305" key="3"/>
<accession>Q1JIP8</accession>
<organism>
    <name type="scientific">Streptococcus pyogenes serotype M2 (strain MGAS10270)</name>
    <dbReference type="NCBI Taxonomy" id="370552"/>
    <lineage>
        <taxon>Bacteria</taxon>
        <taxon>Bacillati</taxon>
        <taxon>Bacillota</taxon>
        <taxon>Bacilli</taxon>
        <taxon>Lactobacillales</taxon>
        <taxon>Streptococcaceae</taxon>
        <taxon>Streptococcus</taxon>
    </lineage>
</organism>
<dbReference type="EMBL" id="CP000260">
    <property type="protein sequence ID" value="ABF33275.1"/>
    <property type="molecule type" value="Genomic_DNA"/>
</dbReference>
<dbReference type="RefSeq" id="WP_002885866.1">
    <property type="nucleotide sequence ID" value="NZ_CVUH01000002.1"/>
</dbReference>
<dbReference type="SMR" id="Q1JIP8"/>
<dbReference type="GeneID" id="93923177"/>
<dbReference type="KEGG" id="sph:MGAS10270_Spy0210"/>
<dbReference type="HOGENOM" id="CLU_129938_2_0_9"/>
<dbReference type="Proteomes" id="UP000002436">
    <property type="component" value="Chromosome"/>
</dbReference>
<dbReference type="GO" id="GO:1990904">
    <property type="term" value="C:ribonucleoprotein complex"/>
    <property type="evidence" value="ECO:0007669"/>
    <property type="project" value="UniProtKB-KW"/>
</dbReference>
<dbReference type="GO" id="GO:0005840">
    <property type="term" value="C:ribosome"/>
    <property type="evidence" value="ECO:0007669"/>
    <property type="project" value="UniProtKB-KW"/>
</dbReference>
<dbReference type="GO" id="GO:0003735">
    <property type="term" value="F:structural constituent of ribosome"/>
    <property type="evidence" value="ECO:0007669"/>
    <property type="project" value="InterPro"/>
</dbReference>
<dbReference type="GO" id="GO:0006412">
    <property type="term" value="P:translation"/>
    <property type="evidence" value="ECO:0007669"/>
    <property type="project" value="UniProtKB-UniRule"/>
</dbReference>
<dbReference type="FunFam" id="1.10.287.3980:FF:000001">
    <property type="entry name" value="Mitochondrial ribosomal protein L34"/>
    <property type="match status" value="1"/>
</dbReference>
<dbReference type="Gene3D" id="1.10.287.3980">
    <property type="match status" value="1"/>
</dbReference>
<dbReference type="HAMAP" id="MF_00391">
    <property type="entry name" value="Ribosomal_bL34"/>
    <property type="match status" value="1"/>
</dbReference>
<dbReference type="InterPro" id="IPR000271">
    <property type="entry name" value="Ribosomal_bL34"/>
</dbReference>
<dbReference type="InterPro" id="IPR020939">
    <property type="entry name" value="Ribosomal_bL34_CS"/>
</dbReference>
<dbReference type="NCBIfam" id="TIGR01030">
    <property type="entry name" value="rpmH_bact"/>
    <property type="match status" value="1"/>
</dbReference>
<dbReference type="PANTHER" id="PTHR14503:SF4">
    <property type="entry name" value="LARGE RIBOSOMAL SUBUNIT PROTEIN BL34M"/>
    <property type="match status" value="1"/>
</dbReference>
<dbReference type="PANTHER" id="PTHR14503">
    <property type="entry name" value="MITOCHONDRIAL RIBOSOMAL PROTEIN 34 FAMILY MEMBER"/>
    <property type="match status" value="1"/>
</dbReference>
<dbReference type="Pfam" id="PF00468">
    <property type="entry name" value="Ribosomal_L34"/>
    <property type="match status" value="1"/>
</dbReference>
<dbReference type="PROSITE" id="PS00784">
    <property type="entry name" value="RIBOSOMAL_L34"/>
    <property type="match status" value="1"/>
</dbReference>
<feature type="chain" id="PRO_1000013465" description="Large ribosomal subunit protein bL34">
    <location>
        <begin position="1"/>
        <end position="44"/>
    </location>
</feature>
<feature type="region of interest" description="Disordered" evidence="2">
    <location>
        <begin position="1"/>
        <end position="44"/>
    </location>
</feature>
<name>RL34_STRPD</name>